<reference key="1">
    <citation type="journal article" date="2009" name="J. Biol. Chem.">
        <title>Snake venom vascular endothelial growth factors (VEGF-Fs) exclusively vary their structures and functions among species.</title>
        <authorList>
            <person name="Yamazaki Y."/>
            <person name="Matsunaga Y."/>
            <person name="Tokunaga Y."/>
            <person name="Obayashi S."/>
            <person name="Saito M."/>
            <person name="Morita T."/>
        </authorList>
    </citation>
    <scope>NUCLEOTIDE SEQUENCE [MRNA]</scope>
    <source>
        <tissue>Venom gland</tissue>
    </source>
</reference>
<organism>
    <name type="scientific">Agkistrodon piscivorus piscivorus</name>
    <name type="common">Eastern cottonmouth</name>
    <dbReference type="NCBI Taxonomy" id="8716"/>
    <lineage>
        <taxon>Eukaryota</taxon>
        <taxon>Metazoa</taxon>
        <taxon>Chordata</taxon>
        <taxon>Craniata</taxon>
        <taxon>Vertebrata</taxon>
        <taxon>Euteleostomi</taxon>
        <taxon>Lepidosauria</taxon>
        <taxon>Squamata</taxon>
        <taxon>Bifurcata</taxon>
        <taxon>Unidentata</taxon>
        <taxon>Episquamata</taxon>
        <taxon>Toxicofera</taxon>
        <taxon>Serpentes</taxon>
        <taxon>Colubroidea</taxon>
        <taxon>Viperidae</taxon>
        <taxon>Crotalinae</taxon>
        <taxon>Agkistrodon</taxon>
    </lineage>
</organism>
<sequence length="124" mass="13700">MAAYLLAVAILFCIQGWPSGTVQGQAMPFMEVYTRSACQTRETLVSILEEHPHEISHLFKPSCVTVLRCGGCCSDESLTCTSTGKRSVGREIMRVDPHKETSKIEVMQFTEHTDCECRPQSASG</sequence>
<keyword id="KW-1015">Disulfide bond</keyword>
<keyword id="KW-0339">Growth factor</keyword>
<keyword id="KW-0873">Pyrrolidone carboxylic acid</keyword>
<keyword id="KW-0964">Secreted</keyword>
<keyword id="KW-0732">Signal</keyword>
<keyword id="KW-0800">Toxin</keyword>
<protein>
    <recommendedName>
        <fullName evidence="7">Snake venom vascular endothelial growth factor toxin apiscin</fullName>
        <shortName>svVEGF</shortName>
    </recommendedName>
    <alternativeName>
        <fullName evidence="1">VEGF-F</fullName>
    </alternativeName>
</protein>
<accession>C0K3N2</accession>
<feature type="signal peptide" evidence="6">
    <location>
        <begin position="1"/>
        <end position="24"/>
    </location>
</feature>
<feature type="chain" id="PRO_5000452061" description="Snake venom vascular endothelial growth factor toxin apiscin">
    <location>
        <begin position="25"/>
        <end position="124"/>
    </location>
</feature>
<feature type="modified residue" description="Pyrrolidone carboxylic acid" evidence="4">
    <location>
        <position position="25"/>
    </location>
</feature>
<feature type="disulfide bond" evidence="3">
    <location>
        <begin position="38"/>
        <end position="80"/>
    </location>
</feature>
<feature type="disulfide bond" description="Interchain (with C-72)" evidence="3">
    <location>
        <position position="63"/>
    </location>
</feature>
<feature type="disulfide bond" evidence="3">
    <location>
        <begin position="69"/>
        <end position="115"/>
    </location>
</feature>
<feature type="disulfide bond" description="Interchain (with C-63)" evidence="3">
    <location>
        <position position="72"/>
    </location>
</feature>
<feature type="disulfide bond" evidence="3">
    <location>
        <begin position="73"/>
        <end position="117"/>
    </location>
</feature>
<evidence type="ECO:0000250" key="1">
    <source>
        <dbReference type="UniProtKB" id="P0DL42"/>
    </source>
</evidence>
<evidence type="ECO:0000250" key="2">
    <source>
        <dbReference type="UniProtKB" id="P67862"/>
    </source>
</evidence>
<evidence type="ECO:0000250" key="3">
    <source>
        <dbReference type="UniProtKB" id="P67863"/>
    </source>
</evidence>
<evidence type="ECO:0000250" key="4">
    <source>
        <dbReference type="UniProtKB" id="P83942"/>
    </source>
</evidence>
<evidence type="ECO:0000250" key="5">
    <source>
        <dbReference type="UniProtKB" id="Q330K6"/>
    </source>
</evidence>
<evidence type="ECO:0000255" key="6"/>
<evidence type="ECO:0000303" key="7">
    <source>
    </source>
</evidence>
<evidence type="ECO:0000305" key="8"/>
<evidence type="ECO:0000305" key="9">
    <source>
    </source>
</evidence>
<proteinExistence type="evidence at transcript level"/>
<dbReference type="EMBL" id="FJ554636">
    <property type="protein sequence ID" value="ACN22039.1"/>
    <property type="molecule type" value="mRNA"/>
</dbReference>
<dbReference type="SMR" id="C0K3N2"/>
<dbReference type="GO" id="GO:0005615">
    <property type="term" value="C:extracellular space"/>
    <property type="evidence" value="ECO:0007669"/>
    <property type="project" value="TreeGrafter"/>
</dbReference>
<dbReference type="GO" id="GO:0016020">
    <property type="term" value="C:membrane"/>
    <property type="evidence" value="ECO:0007669"/>
    <property type="project" value="InterPro"/>
</dbReference>
<dbReference type="GO" id="GO:0042056">
    <property type="term" value="F:chemoattractant activity"/>
    <property type="evidence" value="ECO:0007669"/>
    <property type="project" value="TreeGrafter"/>
</dbReference>
<dbReference type="GO" id="GO:0008083">
    <property type="term" value="F:growth factor activity"/>
    <property type="evidence" value="ECO:0007669"/>
    <property type="project" value="UniProtKB-KW"/>
</dbReference>
<dbReference type="GO" id="GO:0090729">
    <property type="term" value="F:toxin activity"/>
    <property type="evidence" value="ECO:0007669"/>
    <property type="project" value="UniProtKB-KW"/>
</dbReference>
<dbReference type="GO" id="GO:0005172">
    <property type="term" value="F:vascular endothelial growth factor receptor binding"/>
    <property type="evidence" value="ECO:0007669"/>
    <property type="project" value="TreeGrafter"/>
</dbReference>
<dbReference type="GO" id="GO:0050930">
    <property type="term" value="P:induction of positive chemotaxis"/>
    <property type="evidence" value="ECO:0007669"/>
    <property type="project" value="TreeGrafter"/>
</dbReference>
<dbReference type="GO" id="GO:0045766">
    <property type="term" value="P:positive regulation of angiogenesis"/>
    <property type="evidence" value="ECO:0007669"/>
    <property type="project" value="TreeGrafter"/>
</dbReference>
<dbReference type="GO" id="GO:0001938">
    <property type="term" value="P:positive regulation of endothelial cell proliferation"/>
    <property type="evidence" value="ECO:0007669"/>
    <property type="project" value="TreeGrafter"/>
</dbReference>
<dbReference type="GO" id="GO:0060754">
    <property type="term" value="P:positive regulation of mast cell chemotaxis"/>
    <property type="evidence" value="ECO:0007669"/>
    <property type="project" value="TreeGrafter"/>
</dbReference>
<dbReference type="GO" id="GO:0001666">
    <property type="term" value="P:response to hypoxia"/>
    <property type="evidence" value="ECO:0007669"/>
    <property type="project" value="TreeGrafter"/>
</dbReference>
<dbReference type="GO" id="GO:0002040">
    <property type="term" value="P:sprouting angiogenesis"/>
    <property type="evidence" value="ECO:0007669"/>
    <property type="project" value="TreeGrafter"/>
</dbReference>
<dbReference type="GO" id="GO:0048010">
    <property type="term" value="P:vascular endothelial growth factor receptor signaling pathway"/>
    <property type="evidence" value="ECO:0007669"/>
    <property type="project" value="TreeGrafter"/>
</dbReference>
<dbReference type="GO" id="GO:0038084">
    <property type="term" value="P:vascular endothelial growth factor signaling pathway"/>
    <property type="evidence" value="ECO:0007669"/>
    <property type="project" value="TreeGrafter"/>
</dbReference>
<dbReference type="CDD" id="cd00135">
    <property type="entry name" value="PDGF"/>
    <property type="match status" value="1"/>
</dbReference>
<dbReference type="FunFam" id="2.10.90.10:FF:000030">
    <property type="entry name" value="Vascular endothelial growth factor B"/>
    <property type="match status" value="1"/>
</dbReference>
<dbReference type="Gene3D" id="2.10.90.10">
    <property type="entry name" value="Cystine-knot cytokines"/>
    <property type="match status" value="1"/>
</dbReference>
<dbReference type="InterPro" id="IPR029034">
    <property type="entry name" value="Cystine-knot_cytokine"/>
</dbReference>
<dbReference type="InterPro" id="IPR023581">
    <property type="entry name" value="PD_growth_factor_CS"/>
</dbReference>
<dbReference type="InterPro" id="IPR000072">
    <property type="entry name" value="PDGF/VEGF_dom"/>
</dbReference>
<dbReference type="InterPro" id="IPR050507">
    <property type="entry name" value="PDGF/VEGF_growth_factor"/>
</dbReference>
<dbReference type="PANTHER" id="PTHR12025">
    <property type="entry name" value="VASCULAR ENDOTHELIAL GROWTH FACTOR"/>
    <property type="match status" value="1"/>
</dbReference>
<dbReference type="PANTHER" id="PTHR12025:SF5">
    <property type="entry name" value="VASCULAR ENDOTHELIAL GROWTH FACTOR A, LONG FORM"/>
    <property type="match status" value="1"/>
</dbReference>
<dbReference type="Pfam" id="PF00341">
    <property type="entry name" value="PDGF"/>
    <property type="match status" value="1"/>
</dbReference>
<dbReference type="SMART" id="SM00141">
    <property type="entry name" value="PDGF"/>
    <property type="match status" value="1"/>
</dbReference>
<dbReference type="SUPFAM" id="SSF57501">
    <property type="entry name" value="Cystine-knot cytokines"/>
    <property type="match status" value="1"/>
</dbReference>
<dbReference type="PROSITE" id="PS00249">
    <property type="entry name" value="PDGF_1"/>
    <property type="match status" value="1"/>
</dbReference>
<dbReference type="PROSITE" id="PS50278">
    <property type="entry name" value="PDGF_2"/>
    <property type="match status" value="1"/>
</dbReference>
<name>TXVE_AGKPI</name>
<comment type="function">
    <text evidence="2 4 5">Snake venom VEGFs that may contribute to venom dispersion and prey subjugation by inducing vascular permeability and hypotension. This protein induces an increase in capillary permeability after intradermal injection, as well as a drastic hypotensive effect after intravenous injection (By similarity). The hypotension is mediated by nitric oxide (NO), which is produced by VEGF-activated endothelium NO synthase. Also induces angiogenesis in vitro (By similarity). Like other crotalid VEGFs, this protein interacts with VEGF receptor-1 (FLT1) with a high affinity, whereas it binds to VEGF receptor-2 (KDR) with a low affinity (By similarity).</text>
</comment>
<comment type="subunit">
    <text evidence="2">Homodimer; disulfide-linked. Interacts with VEGF receptor-1 (FLT1) with a high affinity, whereas it binds to VEGF receptor-2 (KDR) with a low affinity. Does not bind VEGF receptor-3 (FLT4).</text>
</comment>
<comment type="subcellular location">
    <subcellularLocation>
        <location evidence="9">Secreted</location>
    </subcellularLocation>
</comment>
<comment type="tissue specificity">
    <text evidence="9">Expressed by the venom gland.</text>
</comment>
<comment type="similarity">
    <text evidence="8">Belongs to the PDGF/VEGF growth factor family. Snake venom VEGF subfamily.</text>
</comment>